<accession>B7NQB2</accession>
<reference key="1">
    <citation type="journal article" date="2009" name="PLoS Genet.">
        <title>Organised genome dynamics in the Escherichia coli species results in highly diverse adaptive paths.</title>
        <authorList>
            <person name="Touchon M."/>
            <person name="Hoede C."/>
            <person name="Tenaillon O."/>
            <person name="Barbe V."/>
            <person name="Baeriswyl S."/>
            <person name="Bidet P."/>
            <person name="Bingen E."/>
            <person name="Bonacorsi S."/>
            <person name="Bouchier C."/>
            <person name="Bouvet O."/>
            <person name="Calteau A."/>
            <person name="Chiapello H."/>
            <person name="Clermont O."/>
            <person name="Cruveiller S."/>
            <person name="Danchin A."/>
            <person name="Diard M."/>
            <person name="Dossat C."/>
            <person name="Karoui M.E."/>
            <person name="Frapy E."/>
            <person name="Garry L."/>
            <person name="Ghigo J.M."/>
            <person name="Gilles A.M."/>
            <person name="Johnson J."/>
            <person name="Le Bouguenec C."/>
            <person name="Lescat M."/>
            <person name="Mangenot S."/>
            <person name="Martinez-Jehanne V."/>
            <person name="Matic I."/>
            <person name="Nassif X."/>
            <person name="Oztas S."/>
            <person name="Petit M.A."/>
            <person name="Pichon C."/>
            <person name="Rouy Z."/>
            <person name="Ruf C.S."/>
            <person name="Schneider D."/>
            <person name="Tourret J."/>
            <person name="Vacherie B."/>
            <person name="Vallenet D."/>
            <person name="Medigue C."/>
            <person name="Rocha E.P.C."/>
            <person name="Denamur E."/>
        </authorList>
    </citation>
    <scope>NUCLEOTIDE SEQUENCE [LARGE SCALE GENOMIC DNA]</scope>
    <source>
        <strain>IAI39 / ExPEC</strain>
    </source>
</reference>
<proteinExistence type="inferred from homology"/>
<organism>
    <name type="scientific">Escherichia coli O7:K1 (strain IAI39 / ExPEC)</name>
    <dbReference type="NCBI Taxonomy" id="585057"/>
    <lineage>
        <taxon>Bacteria</taxon>
        <taxon>Pseudomonadati</taxon>
        <taxon>Pseudomonadota</taxon>
        <taxon>Gammaproteobacteria</taxon>
        <taxon>Enterobacterales</taxon>
        <taxon>Enterobacteriaceae</taxon>
        <taxon>Escherichia</taxon>
    </lineage>
</organism>
<gene>
    <name evidence="1" type="primary">mdtA</name>
    <name type="ordered locus">ECIAI39_0940</name>
</gene>
<sequence length="415" mass="44498">MKGSYKSRWVIVIVVVIAAIAAFWFWQGRNDSRSAAPGATKQAQQSPAGGRRGMRAGPLAPVQAATAVEQAVPRYLTGLGTITAANTVTVRSRVDGQLMALHFQEGQQVKAGDLLAEIDPSQFKVALAQAQGQLAKDKATLANARRDLARYQQLVKTNLVSRQELDAQQALVSETEGTIKADEASVASAQLQLDWSRITAPVDGRVGLKQVDVGNQISSGDTTGIVVITQTHPIDLLFTLPESDIATVVQAQKAGKPLVVEAWDRTNSKKLSEGTLLSLDNQIDATTGTIKVKARFNNQDDALFPNQFVNARMLVDTEQNAVVIPTAALQMGNEGHFVWVLNSENKVSKHLVTPGIQDSQKVVIRAGISAGDRVVTDGIDRLTEGAKVEVVEAQSATTSEEKATSREYAKKGARS</sequence>
<comment type="function">
    <text evidence="1">The MdtABC tripartite complex confers resistance against novobiocin and deoxycholate.</text>
</comment>
<comment type="subunit">
    <text evidence="1">Part of a tripartite efflux system composed of MdtA, MdtB and MdtC.</text>
</comment>
<comment type="subcellular location">
    <subcellularLocation>
        <location evidence="1">Cell inner membrane</location>
        <topology evidence="1">Peripheral membrane protein</topology>
    </subcellularLocation>
</comment>
<comment type="induction">
    <text evidence="1">The mdtABC operon is transcriptionally activated by BaeR.</text>
</comment>
<comment type="similarity">
    <text evidence="1">Belongs to the membrane fusion protein (MFP) (TC 8.A.1) family.</text>
</comment>
<evidence type="ECO:0000255" key="1">
    <source>
        <dbReference type="HAMAP-Rule" id="MF_01422"/>
    </source>
</evidence>
<evidence type="ECO:0000256" key="2">
    <source>
        <dbReference type="SAM" id="MobiDB-lite"/>
    </source>
</evidence>
<name>MDTA_ECO7I</name>
<dbReference type="EMBL" id="CU928164">
    <property type="protein sequence ID" value="CAR17077.1"/>
    <property type="molecule type" value="Genomic_DNA"/>
</dbReference>
<dbReference type="RefSeq" id="WP_000678979.1">
    <property type="nucleotide sequence ID" value="NC_011750.1"/>
</dbReference>
<dbReference type="RefSeq" id="YP_002406962.1">
    <property type="nucleotide sequence ID" value="NC_011750.1"/>
</dbReference>
<dbReference type="SMR" id="B7NQB2"/>
<dbReference type="STRING" id="585057.ECIAI39_0940"/>
<dbReference type="KEGG" id="ect:ECIAI39_0940"/>
<dbReference type="PATRIC" id="fig|585057.6.peg.990"/>
<dbReference type="HOGENOM" id="CLU_018816_2_0_6"/>
<dbReference type="Proteomes" id="UP000000749">
    <property type="component" value="Chromosome"/>
</dbReference>
<dbReference type="GO" id="GO:1990281">
    <property type="term" value="C:efflux pump complex"/>
    <property type="evidence" value="ECO:0007669"/>
    <property type="project" value="TreeGrafter"/>
</dbReference>
<dbReference type="GO" id="GO:0005886">
    <property type="term" value="C:plasma membrane"/>
    <property type="evidence" value="ECO:0007669"/>
    <property type="project" value="UniProtKB-SubCell"/>
</dbReference>
<dbReference type="GO" id="GO:0015562">
    <property type="term" value="F:efflux transmembrane transporter activity"/>
    <property type="evidence" value="ECO:0007669"/>
    <property type="project" value="TreeGrafter"/>
</dbReference>
<dbReference type="FunFam" id="2.40.420.20:FF:000001">
    <property type="entry name" value="Efflux RND transporter periplasmic adaptor subunit"/>
    <property type="match status" value="1"/>
</dbReference>
<dbReference type="FunFam" id="1.10.287.470:FF:000005">
    <property type="entry name" value="Multidrug resistance protein MdtA"/>
    <property type="match status" value="1"/>
</dbReference>
<dbReference type="FunFam" id="2.40.30.170:FF:000006">
    <property type="entry name" value="Multidrug resistance protein MdtA"/>
    <property type="match status" value="1"/>
</dbReference>
<dbReference type="Gene3D" id="2.40.30.170">
    <property type="match status" value="1"/>
</dbReference>
<dbReference type="Gene3D" id="2.40.420.20">
    <property type="match status" value="1"/>
</dbReference>
<dbReference type="Gene3D" id="2.40.50.100">
    <property type="match status" value="1"/>
</dbReference>
<dbReference type="Gene3D" id="1.10.287.470">
    <property type="entry name" value="Helix hairpin bin"/>
    <property type="match status" value="1"/>
</dbReference>
<dbReference type="HAMAP" id="MF_01422">
    <property type="entry name" value="MdtA"/>
    <property type="match status" value="1"/>
</dbReference>
<dbReference type="InterPro" id="IPR032317">
    <property type="entry name" value="CusB_D23"/>
</dbReference>
<dbReference type="InterPro" id="IPR022824">
    <property type="entry name" value="Multidrug-R_MdtA"/>
</dbReference>
<dbReference type="InterPro" id="IPR006143">
    <property type="entry name" value="RND_pump_MFP"/>
</dbReference>
<dbReference type="NCBIfam" id="NF008589">
    <property type="entry name" value="PRK11556.1"/>
    <property type="match status" value="1"/>
</dbReference>
<dbReference type="NCBIfam" id="TIGR01730">
    <property type="entry name" value="RND_mfp"/>
    <property type="match status" value="1"/>
</dbReference>
<dbReference type="PANTHER" id="PTHR30469">
    <property type="entry name" value="MULTIDRUG RESISTANCE PROTEIN MDTA"/>
    <property type="match status" value="1"/>
</dbReference>
<dbReference type="PANTHER" id="PTHR30469:SF12">
    <property type="entry name" value="MULTIDRUG RESISTANCE PROTEIN MDTA"/>
    <property type="match status" value="1"/>
</dbReference>
<dbReference type="Pfam" id="PF16576">
    <property type="entry name" value="HlyD_D23"/>
    <property type="match status" value="1"/>
</dbReference>
<dbReference type="SUPFAM" id="SSF111369">
    <property type="entry name" value="HlyD-like secretion proteins"/>
    <property type="match status" value="1"/>
</dbReference>
<protein>
    <recommendedName>
        <fullName evidence="1">Multidrug resistance protein MdtA</fullName>
    </recommendedName>
    <alternativeName>
        <fullName evidence="1">Multidrug transporter MdtA</fullName>
    </alternativeName>
</protein>
<feature type="signal peptide" evidence="1">
    <location>
        <begin position="1"/>
        <end position="21"/>
    </location>
</feature>
<feature type="chain" id="PRO_1000145636" description="Multidrug resistance protein MdtA">
    <location>
        <begin position="22"/>
        <end position="415"/>
    </location>
</feature>
<feature type="region of interest" description="Disordered" evidence="2">
    <location>
        <begin position="32"/>
        <end position="56"/>
    </location>
</feature>
<feature type="region of interest" description="Disordered" evidence="2">
    <location>
        <begin position="392"/>
        <end position="415"/>
    </location>
</feature>
<feature type="compositionally biased region" description="Basic and acidic residues" evidence="2">
    <location>
        <begin position="399"/>
        <end position="415"/>
    </location>
</feature>
<keyword id="KW-0997">Cell inner membrane</keyword>
<keyword id="KW-1003">Cell membrane</keyword>
<keyword id="KW-0472">Membrane</keyword>
<keyword id="KW-0732">Signal</keyword>
<keyword id="KW-0813">Transport</keyword>